<proteinExistence type="inferred from homology"/>
<accession>Q6FNM7</accession>
<feature type="chain" id="PRO_0000314247" description="Mediator of RNA polymerase II transcription subunit 13">
    <location>
        <begin position="1"/>
        <end position="1345"/>
    </location>
</feature>
<feature type="region of interest" description="Disordered" evidence="2">
    <location>
        <begin position="363"/>
        <end position="387"/>
    </location>
</feature>
<feature type="region of interest" description="Disordered" evidence="2">
    <location>
        <begin position="402"/>
        <end position="537"/>
    </location>
</feature>
<feature type="compositionally biased region" description="Low complexity" evidence="2">
    <location>
        <begin position="364"/>
        <end position="375"/>
    </location>
</feature>
<feature type="compositionally biased region" description="Polar residues" evidence="2">
    <location>
        <begin position="406"/>
        <end position="415"/>
    </location>
</feature>
<feature type="compositionally biased region" description="Acidic residues" evidence="2">
    <location>
        <begin position="469"/>
        <end position="482"/>
    </location>
</feature>
<feature type="compositionally biased region" description="Polar residues" evidence="2">
    <location>
        <begin position="486"/>
        <end position="501"/>
    </location>
</feature>
<organism>
    <name type="scientific">Candida glabrata (strain ATCC 2001 / BCRC 20586 / JCM 3761 / NBRC 0622 / NRRL Y-65 / CBS 138)</name>
    <name type="common">Yeast</name>
    <name type="synonym">Nakaseomyces glabratus</name>
    <dbReference type="NCBI Taxonomy" id="284593"/>
    <lineage>
        <taxon>Eukaryota</taxon>
        <taxon>Fungi</taxon>
        <taxon>Dikarya</taxon>
        <taxon>Ascomycota</taxon>
        <taxon>Saccharomycotina</taxon>
        <taxon>Saccharomycetes</taxon>
        <taxon>Saccharomycetales</taxon>
        <taxon>Saccharomycetaceae</taxon>
        <taxon>Nakaseomyces</taxon>
    </lineage>
</organism>
<sequence length="1345" mass="151209">MKEATDDYDLSKLVSNFYRLEKITKINYAQYLPKKQNDQWGIQMEIQMRKKDRKLLVALLSKELWCFSINDQVLPSPNDIDPELNVSADKTGSFTADYSKPNLPPHYALFLKSLKRMIYLNLVEQSKNTLVQFGNSCINITKNNESNNLLQIEPHLFSNSELAISICVKDLGLLPLKVNSIDPAFLSSHALYMAPSGVRVYLVENKNDNSGTNQEHLHKYLVPVPENGEVLLKTLYASHGIKLNSSTCQWVNIIPNITHLNGRAPNISQYMDLPKELRTIVWPLDLVFAQPALDIDSSTTLSQINGLDTFEDTLSLIDNFLQLKQSSSYRTPGSSGGLTGTNIGTNVFSSEGAYTDQFQVYPKSQTNQQQTSSNSKVSPSDAASPYPGIDKIIEQKQFTPDFMASPSVSGNSNELFNDRKNGHTDLLISPSKMDVDTDFPGSNLAGQEAPSQPASDVKKSSVSASDSELFGEEDEDEDDADLFGESNNDSTGESNANNSKGEITEDIFASSDDESSLQPKKESTFYDGIKNGSAESGLNMQDRANLKRTYLDIRIEETPLSSPLYTDPGAPLPVETPRDRRKSVFAPLNFNPIIAKDVDNKYKNGGKYSFSPLQKEEALNFDVSRTELSSSEGEDSESSDDELEDLANKNDGVVYDKAENIGYKTFANLQDSVPPGLIKQDFLGNPYLASLEGSKEGQNTIWKMPQTDIAQTESPLKAIDTSIGPDGTLPNTTSSEQSKSVYVHDYGISPTKMSNDPAFDTAKIEGKYEFMNNFPSSFPFLLRHMPLSLIPDTFKHLNPTITVNERNNQIIDLLAEQIVYDYNILGNLTIPDVPYSGIRNYSNGVVKNTIDNLFSEFTRLDGTTLISRLYPMETPFVSVRKQHDQIKLRSDVQQFTKYANLKPVRGIKNFKFLVLTDSFKEDCIQFISSLSQTYINHELGFCEHLQLTNEDSKGLIYLKDFEDSKLLLLAAQIVSYLSTNRTSGKEVAFMMIIPVQRCDISELVEKTAKFQIIQNEVKAKIPSMELYLKIVPMDFIKSPLTSVDDYTNLCISIYNILPNKMIKFTHIRKQIPEKLTFKTSQQASAFKYDAYIHLAYSRSVDKQWMFAALSDSAGKENMMKTWYLGSSKNKFDEACNHIWEMALSLAGKNYGKVCLILTRLNGILPDDELMNWRRLSGRNIHLAVVCVDDNTKISFFDRNESYPSYKRLYQNANSIETLVDPERIDDYLIRDLDQDIHGVIFENPFPLVNSLHRCAIKSGALVKFNVSTTATEPHSLDKFEVNLLNCPHSDSFKLLETILEEFRNLAALNVWFGITNGENGHIPWHVLAVKKMMKTLVHTRVKVAQ</sequence>
<evidence type="ECO:0000250" key="1"/>
<evidence type="ECO:0000256" key="2">
    <source>
        <dbReference type="SAM" id="MobiDB-lite"/>
    </source>
</evidence>
<evidence type="ECO:0000305" key="3"/>
<name>SSN2_CANGA</name>
<comment type="function">
    <text evidence="1">Component of the SRB8-11 complex. The SRB8-11 complex is a regulatory module of the Mediator complex which is itself involved in regulation of basal and activated RNA polymerase II-dependent transcription. The SRB8-11 complex may be involved in the transcriptional repression of a subset of genes regulated by Mediator. It may inhibit the association of the Mediator complex with RNA polymerase II to form the holoenzyme complex (By similarity).</text>
</comment>
<comment type="subunit">
    <text evidence="1">Component of the SRB8-11 complex, which itself associates with the Mediator complex.</text>
</comment>
<comment type="subcellular location">
    <subcellularLocation>
        <location evidence="3">Nucleus</location>
    </subcellularLocation>
</comment>
<comment type="similarity">
    <text evidence="3">Belongs to the Mediator complex subunit 13 family.</text>
</comment>
<keyword id="KW-0010">Activator</keyword>
<keyword id="KW-0539">Nucleus</keyword>
<keyword id="KW-1185">Reference proteome</keyword>
<keyword id="KW-0678">Repressor</keyword>
<keyword id="KW-0804">Transcription</keyword>
<keyword id="KW-0805">Transcription regulation</keyword>
<dbReference type="EMBL" id="CR380956">
    <property type="protein sequence ID" value="CAG61118.1"/>
    <property type="molecule type" value="Genomic_DNA"/>
</dbReference>
<dbReference type="RefSeq" id="XP_448167.1">
    <property type="nucleotide sequence ID" value="XM_448167.1"/>
</dbReference>
<dbReference type="SMR" id="Q6FNM7"/>
<dbReference type="FunCoup" id="Q6FNM7">
    <property type="interactions" value="154"/>
</dbReference>
<dbReference type="STRING" id="284593.Q6FNM7"/>
<dbReference type="EnsemblFungi" id="CAGL0J10472g-T">
    <property type="protein sequence ID" value="CAGL0J10472g-T-p1"/>
    <property type="gene ID" value="CAGL0J10472g"/>
</dbReference>
<dbReference type="KEGG" id="cgr:2889605"/>
<dbReference type="CGD" id="CAL0132930">
    <property type="gene designation" value="CAGL0J10472g"/>
</dbReference>
<dbReference type="VEuPathDB" id="FungiDB:CAGL0J10472g"/>
<dbReference type="eggNOG" id="KOG3600">
    <property type="taxonomic scope" value="Eukaryota"/>
</dbReference>
<dbReference type="HOGENOM" id="CLU_242296_0_0_1"/>
<dbReference type="InParanoid" id="Q6FNM7"/>
<dbReference type="OMA" id="FSRELWC"/>
<dbReference type="Proteomes" id="UP000002428">
    <property type="component" value="Chromosome J"/>
</dbReference>
<dbReference type="GO" id="GO:1990508">
    <property type="term" value="C:CKM complex"/>
    <property type="evidence" value="ECO:0007669"/>
    <property type="project" value="EnsemblFungi"/>
</dbReference>
<dbReference type="GO" id="GO:0016592">
    <property type="term" value="C:mediator complex"/>
    <property type="evidence" value="ECO:0007669"/>
    <property type="project" value="EnsemblFungi"/>
</dbReference>
<dbReference type="GO" id="GO:0030332">
    <property type="term" value="F:cyclin binding"/>
    <property type="evidence" value="ECO:0007669"/>
    <property type="project" value="EnsemblFungi"/>
</dbReference>
<dbReference type="GO" id="GO:0003713">
    <property type="term" value="F:transcription coactivator activity"/>
    <property type="evidence" value="ECO:0007669"/>
    <property type="project" value="EnsemblFungi"/>
</dbReference>
<dbReference type="GO" id="GO:0000122">
    <property type="term" value="P:negative regulation of transcription by RNA polymerase II"/>
    <property type="evidence" value="ECO:0007669"/>
    <property type="project" value="EnsemblFungi"/>
</dbReference>
<dbReference type="GO" id="GO:0045944">
    <property type="term" value="P:positive regulation of transcription by RNA polymerase II"/>
    <property type="evidence" value="ECO:0007669"/>
    <property type="project" value="EnsemblFungi"/>
</dbReference>
<dbReference type="InterPro" id="IPR009401">
    <property type="entry name" value="Med13_C"/>
</dbReference>
<dbReference type="InterPro" id="IPR051139">
    <property type="entry name" value="Mediator_complx_sub13"/>
</dbReference>
<dbReference type="InterPro" id="IPR021643">
    <property type="entry name" value="Mediator_Med13_N"/>
</dbReference>
<dbReference type="PANTHER" id="PTHR48249">
    <property type="entry name" value="MEDIATOR OF RNA POLYMERASE II TRANSCRIPTION SUBUNIT 13"/>
    <property type="match status" value="1"/>
</dbReference>
<dbReference type="PANTHER" id="PTHR48249:SF3">
    <property type="entry name" value="MEDIATOR OF RNA POLYMERASE II TRANSCRIPTION SUBUNIT 13"/>
    <property type="match status" value="1"/>
</dbReference>
<dbReference type="Pfam" id="PF06333">
    <property type="entry name" value="Med13_C"/>
    <property type="match status" value="2"/>
</dbReference>
<dbReference type="Pfam" id="PF11597">
    <property type="entry name" value="Med13_N"/>
    <property type="match status" value="1"/>
</dbReference>
<gene>
    <name type="primary">SSN2</name>
    <name type="synonym">MED13</name>
    <name type="ordered locus">CAGL0J10472g</name>
</gene>
<reference key="1">
    <citation type="journal article" date="2004" name="Nature">
        <title>Genome evolution in yeasts.</title>
        <authorList>
            <person name="Dujon B."/>
            <person name="Sherman D."/>
            <person name="Fischer G."/>
            <person name="Durrens P."/>
            <person name="Casaregola S."/>
            <person name="Lafontaine I."/>
            <person name="de Montigny J."/>
            <person name="Marck C."/>
            <person name="Neuveglise C."/>
            <person name="Talla E."/>
            <person name="Goffard N."/>
            <person name="Frangeul L."/>
            <person name="Aigle M."/>
            <person name="Anthouard V."/>
            <person name="Babour A."/>
            <person name="Barbe V."/>
            <person name="Barnay S."/>
            <person name="Blanchin S."/>
            <person name="Beckerich J.-M."/>
            <person name="Beyne E."/>
            <person name="Bleykasten C."/>
            <person name="Boisrame A."/>
            <person name="Boyer J."/>
            <person name="Cattolico L."/>
            <person name="Confanioleri F."/>
            <person name="de Daruvar A."/>
            <person name="Despons L."/>
            <person name="Fabre E."/>
            <person name="Fairhead C."/>
            <person name="Ferry-Dumazet H."/>
            <person name="Groppi A."/>
            <person name="Hantraye F."/>
            <person name="Hennequin C."/>
            <person name="Jauniaux N."/>
            <person name="Joyet P."/>
            <person name="Kachouri R."/>
            <person name="Kerrest A."/>
            <person name="Koszul R."/>
            <person name="Lemaire M."/>
            <person name="Lesur I."/>
            <person name="Ma L."/>
            <person name="Muller H."/>
            <person name="Nicaud J.-M."/>
            <person name="Nikolski M."/>
            <person name="Oztas S."/>
            <person name="Ozier-Kalogeropoulos O."/>
            <person name="Pellenz S."/>
            <person name="Potier S."/>
            <person name="Richard G.-F."/>
            <person name="Straub M.-L."/>
            <person name="Suleau A."/>
            <person name="Swennen D."/>
            <person name="Tekaia F."/>
            <person name="Wesolowski-Louvel M."/>
            <person name="Westhof E."/>
            <person name="Wirth B."/>
            <person name="Zeniou-Meyer M."/>
            <person name="Zivanovic Y."/>
            <person name="Bolotin-Fukuhara M."/>
            <person name="Thierry A."/>
            <person name="Bouchier C."/>
            <person name="Caudron B."/>
            <person name="Scarpelli C."/>
            <person name="Gaillardin C."/>
            <person name="Weissenbach J."/>
            <person name="Wincker P."/>
            <person name="Souciet J.-L."/>
        </authorList>
    </citation>
    <scope>NUCLEOTIDE SEQUENCE [LARGE SCALE GENOMIC DNA]</scope>
    <source>
        <strain>ATCC 2001 / BCRC 20586 / JCM 3761 / NBRC 0622 / NRRL Y-65 / CBS 138</strain>
    </source>
</reference>
<protein>
    <recommendedName>
        <fullName>Mediator of RNA polymerase II transcription subunit 13</fullName>
    </recommendedName>
    <alternativeName>
        <fullName>Mediator complex subunit 13</fullName>
    </alternativeName>
</protein>